<gene>
    <name evidence="1" type="primary">recF</name>
    <name type="ordered locus">M28_Spy1888</name>
</gene>
<feature type="chain" id="PRO_0000236150" description="DNA replication and repair protein RecF">
    <location>
        <begin position="1"/>
        <end position="368"/>
    </location>
</feature>
<feature type="binding site" evidence="1">
    <location>
        <begin position="30"/>
        <end position="37"/>
    </location>
    <ligand>
        <name>ATP</name>
        <dbReference type="ChEBI" id="CHEBI:30616"/>
    </ligand>
</feature>
<sequence>MWIKELELKHYRNYDHLLASFSSGLNVFIGNNAQGKTNFLEAIYFLSLTRSHRTRADKELIHFDHSTVSLTGKIQRISGTVDLEINLSDKGRVTKINALKQAKLSDYIGTMMVVLFAPEDLQLVKGAPSLRRKFIDIDLGQIKPVYLSELSHYNHVLKQRNSYLKSAQQIDAAFLAVLDEQLAGYGARVMEHRIDFINALEKEANTHHQAISNGLESLSLSYQSSVVFDKKTNIYQQFLHQLEKNHQKDFFRKNTSVGPHRDNLAFYINGMNANFASQGQHRSLILSLKMAEVSLMKALTGDNPILLLDDVMSELDNTRQTKLLETVIKENVQTFITTTSLDHLSQLPEGIRIFHVTKGTVQVDSDIH</sequence>
<keyword id="KW-0067">ATP-binding</keyword>
<keyword id="KW-0963">Cytoplasm</keyword>
<keyword id="KW-0227">DNA damage</keyword>
<keyword id="KW-0234">DNA repair</keyword>
<keyword id="KW-0235">DNA replication</keyword>
<keyword id="KW-0238">DNA-binding</keyword>
<keyword id="KW-0547">Nucleotide-binding</keyword>
<keyword id="KW-0742">SOS response</keyword>
<reference key="1">
    <citation type="journal article" date="2005" name="J. Infect. Dis.">
        <title>Genome sequence of a serotype M28 strain of group A Streptococcus: potential new insights into puerperal sepsis and bacterial disease specificity.</title>
        <authorList>
            <person name="Green N.M."/>
            <person name="Zhang S."/>
            <person name="Porcella S.F."/>
            <person name="Nagiec M.J."/>
            <person name="Barbian K.D."/>
            <person name="Beres S.B."/>
            <person name="Lefebvre R.B."/>
            <person name="Musser J.M."/>
        </authorList>
    </citation>
    <scope>NUCLEOTIDE SEQUENCE [LARGE SCALE GENOMIC DNA]</scope>
    <source>
        <strain>MGAS6180</strain>
    </source>
</reference>
<protein>
    <recommendedName>
        <fullName evidence="1">DNA replication and repair protein RecF</fullName>
    </recommendedName>
</protein>
<dbReference type="EMBL" id="CP000056">
    <property type="protein sequence ID" value="AAX72998.1"/>
    <property type="molecule type" value="Genomic_DNA"/>
</dbReference>
<dbReference type="RefSeq" id="WP_002991449.1">
    <property type="nucleotide sequence ID" value="NC_007296.2"/>
</dbReference>
<dbReference type="SMR" id="Q48QL2"/>
<dbReference type="KEGG" id="spb:M28_Spy1888"/>
<dbReference type="HOGENOM" id="CLU_040267_0_1_9"/>
<dbReference type="GO" id="GO:0005737">
    <property type="term" value="C:cytoplasm"/>
    <property type="evidence" value="ECO:0007669"/>
    <property type="project" value="UniProtKB-SubCell"/>
</dbReference>
<dbReference type="GO" id="GO:0005524">
    <property type="term" value="F:ATP binding"/>
    <property type="evidence" value="ECO:0007669"/>
    <property type="project" value="UniProtKB-UniRule"/>
</dbReference>
<dbReference type="GO" id="GO:0003697">
    <property type="term" value="F:single-stranded DNA binding"/>
    <property type="evidence" value="ECO:0007669"/>
    <property type="project" value="UniProtKB-UniRule"/>
</dbReference>
<dbReference type="GO" id="GO:0006260">
    <property type="term" value="P:DNA replication"/>
    <property type="evidence" value="ECO:0007669"/>
    <property type="project" value="UniProtKB-UniRule"/>
</dbReference>
<dbReference type="GO" id="GO:0000731">
    <property type="term" value="P:DNA synthesis involved in DNA repair"/>
    <property type="evidence" value="ECO:0007669"/>
    <property type="project" value="TreeGrafter"/>
</dbReference>
<dbReference type="GO" id="GO:0006302">
    <property type="term" value="P:double-strand break repair"/>
    <property type="evidence" value="ECO:0007669"/>
    <property type="project" value="TreeGrafter"/>
</dbReference>
<dbReference type="GO" id="GO:0009432">
    <property type="term" value="P:SOS response"/>
    <property type="evidence" value="ECO:0007669"/>
    <property type="project" value="UniProtKB-UniRule"/>
</dbReference>
<dbReference type="CDD" id="cd03242">
    <property type="entry name" value="ABC_RecF"/>
    <property type="match status" value="1"/>
</dbReference>
<dbReference type="Gene3D" id="3.40.50.300">
    <property type="entry name" value="P-loop containing nucleotide triphosphate hydrolases"/>
    <property type="match status" value="1"/>
</dbReference>
<dbReference type="Gene3D" id="1.20.1050.90">
    <property type="entry name" value="RecF/RecN/SMC, N-terminal domain"/>
    <property type="match status" value="1"/>
</dbReference>
<dbReference type="HAMAP" id="MF_00365">
    <property type="entry name" value="RecF"/>
    <property type="match status" value="1"/>
</dbReference>
<dbReference type="InterPro" id="IPR001238">
    <property type="entry name" value="DNA-binding_RecF"/>
</dbReference>
<dbReference type="InterPro" id="IPR018078">
    <property type="entry name" value="DNA-binding_RecF_CS"/>
</dbReference>
<dbReference type="InterPro" id="IPR027417">
    <property type="entry name" value="P-loop_NTPase"/>
</dbReference>
<dbReference type="InterPro" id="IPR003395">
    <property type="entry name" value="RecF/RecN/SMC_N"/>
</dbReference>
<dbReference type="InterPro" id="IPR042174">
    <property type="entry name" value="RecF_2"/>
</dbReference>
<dbReference type="NCBIfam" id="TIGR00611">
    <property type="entry name" value="recf"/>
    <property type="match status" value="1"/>
</dbReference>
<dbReference type="PANTHER" id="PTHR32182">
    <property type="entry name" value="DNA REPLICATION AND REPAIR PROTEIN RECF"/>
    <property type="match status" value="1"/>
</dbReference>
<dbReference type="PANTHER" id="PTHR32182:SF0">
    <property type="entry name" value="DNA REPLICATION AND REPAIR PROTEIN RECF"/>
    <property type="match status" value="1"/>
</dbReference>
<dbReference type="Pfam" id="PF02463">
    <property type="entry name" value="SMC_N"/>
    <property type="match status" value="1"/>
</dbReference>
<dbReference type="SUPFAM" id="SSF52540">
    <property type="entry name" value="P-loop containing nucleoside triphosphate hydrolases"/>
    <property type="match status" value="1"/>
</dbReference>
<dbReference type="PROSITE" id="PS00617">
    <property type="entry name" value="RECF_1"/>
    <property type="match status" value="1"/>
</dbReference>
<dbReference type="PROSITE" id="PS00618">
    <property type="entry name" value="RECF_2"/>
    <property type="match status" value="1"/>
</dbReference>
<name>RECF_STRPM</name>
<evidence type="ECO:0000255" key="1">
    <source>
        <dbReference type="HAMAP-Rule" id="MF_00365"/>
    </source>
</evidence>
<comment type="function">
    <text evidence="1">The RecF protein is involved in DNA metabolism; it is required for DNA replication and normal SOS inducibility. RecF binds preferentially to single-stranded, linear DNA. It also seems to bind ATP.</text>
</comment>
<comment type="subcellular location">
    <subcellularLocation>
        <location evidence="1">Cytoplasm</location>
    </subcellularLocation>
</comment>
<comment type="similarity">
    <text evidence="1">Belongs to the RecF family.</text>
</comment>
<accession>Q48QL2</accession>
<proteinExistence type="inferred from homology"/>
<organism>
    <name type="scientific">Streptococcus pyogenes serotype M28 (strain MGAS6180)</name>
    <dbReference type="NCBI Taxonomy" id="319701"/>
    <lineage>
        <taxon>Bacteria</taxon>
        <taxon>Bacillati</taxon>
        <taxon>Bacillota</taxon>
        <taxon>Bacilli</taxon>
        <taxon>Lactobacillales</taxon>
        <taxon>Streptococcaceae</taxon>
        <taxon>Streptococcus</taxon>
    </lineage>
</organism>